<proteinExistence type="inferred from homology"/>
<keyword id="KW-0963">Cytoplasm</keyword>
<keyword id="KW-0378">Hydrolase</keyword>
<keyword id="KW-0479">Metal-binding</keyword>
<keyword id="KW-0482">Metalloprotease</keyword>
<keyword id="KW-0539">Nucleus</keyword>
<keyword id="KW-0645">Protease</keyword>
<keyword id="KW-0736">Signalosome</keyword>
<keyword id="KW-0862">Zinc</keyword>
<organism>
    <name type="scientific">Cryptococcus neoformans var. neoformans serotype D (strain B-3501A)</name>
    <name type="common">Filobasidiella neoformans</name>
    <dbReference type="NCBI Taxonomy" id="283643"/>
    <lineage>
        <taxon>Eukaryota</taxon>
        <taxon>Fungi</taxon>
        <taxon>Dikarya</taxon>
        <taxon>Basidiomycota</taxon>
        <taxon>Agaricomycotina</taxon>
        <taxon>Tremellomycetes</taxon>
        <taxon>Tremellales</taxon>
        <taxon>Cryptococcaceae</taxon>
        <taxon>Cryptococcus</taxon>
        <taxon>Cryptococcus neoformans species complex</taxon>
    </lineage>
</organism>
<protein>
    <recommendedName>
        <fullName>COP9 signalosome complex subunit 5</fullName>
        <ecNumber>3.4.-.-</ecNumber>
    </recommendedName>
</protein>
<gene>
    <name type="primary">RRI1</name>
    <name type="synonym">CSN5</name>
    <name type="ordered locus">CNBJ1120</name>
</gene>
<evidence type="ECO:0000250" key="1"/>
<evidence type="ECO:0000255" key="2">
    <source>
        <dbReference type="PROSITE-ProRule" id="PRU01182"/>
    </source>
</evidence>
<evidence type="ECO:0000256" key="3">
    <source>
        <dbReference type="SAM" id="MobiDB-lite"/>
    </source>
</evidence>
<evidence type="ECO:0000305" key="4"/>
<comment type="function">
    <text evidence="1">Catalytic Component of the COP9 signalosome (CSN) complex that acts as an regulator of the ubiquitin (Ubl) conjugation pathway by mediating the deneddylation of the cullin subunit of SCF-type E3 ubiquitin-protein ligase complexes.</text>
</comment>
<comment type="subunit">
    <text evidence="1">Component of the COP9 signalosome (CSN) complex.</text>
</comment>
<comment type="subcellular location">
    <subcellularLocation>
        <location evidence="1">Cytoplasm</location>
    </subcellularLocation>
    <subcellularLocation>
        <location evidence="1">Nucleus</location>
    </subcellularLocation>
</comment>
<comment type="domain">
    <text evidence="1">The JAMM motif is essential for the protease activity of the CSN complex resulting in deneddylation of cullins. It constitutes the catalytic center of the complex (By similarity).</text>
</comment>
<comment type="similarity">
    <text evidence="4">Belongs to the peptidase M67A family. CSN5 subfamily.</text>
</comment>
<sequence>MASTARKTFEINNNVQVVDPSAAIFQYSREEEKLLDDEAPWRTDPHYFHTVKISAVALIKMVTHARSGGIYEIMGIMYGKVRDGTFWIMDVAALPVQGTETRVNAGNEAMEYMVNFQTANAEAGKGELLRGWYHSHPGYGCWLSGIDVNTQLNNQKFNDPYLAVVIDPNRTVSAGKVEIGAFRTYPEGYTPPATGNSQYQSIPMDKIEDFGVHANAYYPLKVEIYKSKLDEKMLDLLWNKYWVATLSSNSLVSNLEYSTSQVQDLNAKLRAASQSISNSSSKLKLKPTQPTTKGKETTEGSDKKLKKGEKEFSGVEEEETPLNKVTQESSRITSEAENGIISQLLKEKLFNTPLTQSVDDKSAQATVQGRY</sequence>
<dbReference type="EC" id="3.4.-.-"/>
<dbReference type="EMBL" id="AAEY01000049">
    <property type="protein sequence ID" value="EAL18470.1"/>
    <property type="molecule type" value="Genomic_DNA"/>
</dbReference>
<dbReference type="RefSeq" id="XP_773117.1">
    <property type="nucleotide sequence ID" value="XM_768024.1"/>
</dbReference>
<dbReference type="SMR" id="P0CQ25"/>
<dbReference type="MEROPS" id="M67.A13"/>
<dbReference type="EnsemblFungi" id="AAW45929">
    <property type="protein sequence ID" value="AAW45929"/>
    <property type="gene ID" value="CNJ02350"/>
</dbReference>
<dbReference type="GeneID" id="4938452"/>
<dbReference type="KEGG" id="cnb:CNBJ1120"/>
<dbReference type="VEuPathDB" id="FungiDB:CNBJ1120"/>
<dbReference type="HOGENOM" id="CLU_053034_0_2_1"/>
<dbReference type="OrthoDB" id="4164at5206"/>
<dbReference type="GO" id="GO:0008180">
    <property type="term" value="C:COP9 signalosome"/>
    <property type="evidence" value="ECO:0007669"/>
    <property type="project" value="UniProtKB-KW"/>
</dbReference>
<dbReference type="GO" id="GO:0005737">
    <property type="term" value="C:cytoplasm"/>
    <property type="evidence" value="ECO:0007669"/>
    <property type="project" value="UniProtKB-SubCell"/>
</dbReference>
<dbReference type="GO" id="GO:0019784">
    <property type="term" value="F:deNEDDylase activity"/>
    <property type="evidence" value="ECO:0007669"/>
    <property type="project" value="EnsemblFungi"/>
</dbReference>
<dbReference type="GO" id="GO:0046872">
    <property type="term" value="F:metal ion binding"/>
    <property type="evidence" value="ECO:0007669"/>
    <property type="project" value="UniProtKB-KW"/>
</dbReference>
<dbReference type="GO" id="GO:0008237">
    <property type="term" value="F:metallopeptidase activity"/>
    <property type="evidence" value="ECO:0007669"/>
    <property type="project" value="UniProtKB-KW"/>
</dbReference>
<dbReference type="GO" id="GO:0000338">
    <property type="term" value="P:protein deneddylation"/>
    <property type="evidence" value="ECO:0007669"/>
    <property type="project" value="EnsemblFungi"/>
</dbReference>
<dbReference type="GO" id="GO:0006508">
    <property type="term" value="P:proteolysis"/>
    <property type="evidence" value="ECO:0007669"/>
    <property type="project" value="UniProtKB-KW"/>
</dbReference>
<dbReference type="CDD" id="cd08069">
    <property type="entry name" value="MPN_RPN11_CSN5"/>
    <property type="match status" value="1"/>
</dbReference>
<dbReference type="FunFam" id="3.40.140.10:FF:000003">
    <property type="entry name" value="COP9 signalosome complex subunit 5"/>
    <property type="match status" value="1"/>
</dbReference>
<dbReference type="Gene3D" id="3.40.140.10">
    <property type="entry name" value="Cytidine Deaminase, domain 2"/>
    <property type="match status" value="1"/>
</dbReference>
<dbReference type="InterPro" id="IPR040961">
    <property type="entry name" value="CSN5_C"/>
</dbReference>
<dbReference type="InterPro" id="IPR000555">
    <property type="entry name" value="JAMM/MPN+_dom"/>
</dbReference>
<dbReference type="InterPro" id="IPR050242">
    <property type="entry name" value="JAMM_MPN+_peptidase_M67A"/>
</dbReference>
<dbReference type="InterPro" id="IPR037518">
    <property type="entry name" value="MPN"/>
</dbReference>
<dbReference type="PANTHER" id="PTHR10410">
    <property type="entry name" value="EUKARYOTIC TRANSLATION INITIATION FACTOR 3 -RELATED"/>
    <property type="match status" value="1"/>
</dbReference>
<dbReference type="Pfam" id="PF18323">
    <property type="entry name" value="CSN5_C"/>
    <property type="match status" value="1"/>
</dbReference>
<dbReference type="Pfam" id="PF01398">
    <property type="entry name" value="JAB"/>
    <property type="match status" value="1"/>
</dbReference>
<dbReference type="SMART" id="SM00232">
    <property type="entry name" value="JAB_MPN"/>
    <property type="match status" value="1"/>
</dbReference>
<dbReference type="SUPFAM" id="SSF102712">
    <property type="entry name" value="JAB1/MPN domain"/>
    <property type="match status" value="1"/>
</dbReference>
<dbReference type="PROSITE" id="PS50249">
    <property type="entry name" value="MPN"/>
    <property type="match status" value="1"/>
</dbReference>
<feature type="chain" id="PRO_0000410222" description="COP9 signalosome complex subunit 5">
    <location>
        <begin position="1"/>
        <end position="371"/>
    </location>
</feature>
<feature type="domain" description="MPN" evidence="2">
    <location>
        <begin position="51"/>
        <end position="188"/>
    </location>
</feature>
<feature type="region of interest" description="Disordered" evidence="3">
    <location>
        <begin position="278"/>
        <end position="333"/>
    </location>
</feature>
<feature type="region of interest" description="Disordered" evidence="3">
    <location>
        <begin position="352"/>
        <end position="371"/>
    </location>
</feature>
<feature type="short sequence motif" description="JAMM motif" evidence="2">
    <location>
        <begin position="134"/>
        <end position="147"/>
    </location>
</feature>
<feature type="compositionally biased region" description="Low complexity" evidence="3">
    <location>
        <begin position="278"/>
        <end position="292"/>
    </location>
</feature>
<feature type="compositionally biased region" description="Basic and acidic residues" evidence="3">
    <location>
        <begin position="293"/>
        <end position="313"/>
    </location>
</feature>
<feature type="compositionally biased region" description="Polar residues" evidence="3">
    <location>
        <begin position="323"/>
        <end position="333"/>
    </location>
</feature>
<feature type="binding site" evidence="2">
    <location>
        <position position="134"/>
    </location>
    <ligand>
        <name>Zn(2+)</name>
        <dbReference type="ChEBI" id="CHEBI:29105"/>
        <note>catalytic</note>
    </ligand>
</feature>
<feature type="binding site" evidence="2">
    <location>
        <position position="136"/>
    </location>
    <ligand>
        <name>Zn(2+)</name>
        <dbReference type="ChEBI" id="CHEBI:29105"/>
        <note>catalytic</note>
    </ligand>
</feature>
<feature type="binding site" evidence="2">
    <location>
        <position position="147"/>
    </location>
    <ligand>
        <name>Zn(2+)</name>
        <dbReference type="ChEBI" id="CHEBI:29105"/>
        <note>catalytic</note>
    </ligand>
</feature>
<accession>P0CQ25</accession>
<accession>Q55L72</accession>
<accession>Q5KAB0</accession>
<name>CSN5_CRYNB</name>
<reference key="1">
    <citation type="journal article" date="2005" name="Science">
        <title>The genome of the basidiomycetous yeast and human pathogen Cryptococcus neoformans.</title>
        <authorList>
            <person name="Loftus B.J."/>
            <person name="Fung E."/>
            <person name="Roncaglia P."/>
            <person name="Rowley D."/>
            <person name="Amedeo P."/>
            <person name="Bruno D."/>
            <person name="Vamathevan J."/>
            <person name="Miranda M."/>
            <person name="Anderson I.J."/>
            <person name="Fraser J.A."/>
            <person name="Allen J.E."/>
            <person name="Bosdet I.E."/>
            <person name="Brent M.R."/>
            <person name="Chiu R."/>
            <person name="Doering T.L."/>
            <person name="Donlin M.J."/>
            <person name="D'Souza C.A."/>
            <person name="Fox D.S."/>
            <person name="Grinberg V."/>
            <person name="Fu J."/>
            <person name="Fukushima M."/>
            <person name="Haas B.J."/>
            <person name="Huang J.C."/>
            <person name="Janbon G."/>
            <person name="Jones S.J.M."/>
            <person name="Koo H.L."/>
            <person name="Krzywinski M.I."/>
            <person name="Kwon-Chung K.J."/>
            <person name="Lengeler K.B."/>
            <person name="Maiti R."/>
            <person name="Marra M.A."/>
            <person name="Marra R.E."/>
            <person name="Mathewson C.A."/>
            <person name="Mitchell T.G."/>
            <person name="Pertea M."/>
            <person name="Riggs F.R."/>
            <person name="Salzberg S.L."/>
            <person name="Schein J.E."/>
            <person name="Shvartsbeyn A."/>
            <person name="Shin H."/>
            <person name="Shumway M."/>
            <person name="Specht C.A."/>
            <person name="Suh B.B."/>
            <person name="Tenney A."/>
            <person name="Utterback T.R."/>
            <person name="Wickes B.L."/>
            <person name="Wortman J.R."/>
            <person name="Wye N.H."/>
            <person name="Kronstad J.W."/>
            <person name="Lodge J.K."/>
            <person name="Heitman J."/>
            <person name="Davis R.W."/>
            <person name="Fraser C.M."/>
            <person name="Hyman R.W."/>
        </authorList>
    </citation>
    <scope>NUCLEOTIDE SEQUENCE [LARGE SCALE GENOMIC DNA]</scope>
    <source>
        <strain>B-3501A</strain>
    </source>
</reference>